<name>BLLF2_EBVA8</name>
<gene>
    <name type="ORF">BLLF2</name>
</gene>
<organism>
    <name type="scientific">Epstein-Barr virus (strain AG876)</name>
    <name type="common">HHV-4</name>
    <name type="synonym">Human herpesvirus 4</name>
    <dbReference type="NCBI Taxonomy" id="82830"/>
    <lineage>
        <taxon>Viruses</taxon>
        <taxon>Duplodnaviria</taxon>
        <taxon>Heunggongvirae</taxon>
        <taxon>Peploviricota</taxon>
        <taxon>Herviviricetes</taxon>
        <taxon>Herpesvirales</taxon>
        <taxon>Orthoherpesviridae</taxon>
        <taxon>Gammaherpesvirinae</taxon>
        <taxon>Lymphocryptovirus</taxon>
        <taxon>Lymphocryptovirus humangamma4</taxon>
        <taxon>Epstein-Barr virus (strain GD1)</taxon>
    </lineage>
</organism>
<protein>
    <recommendedName>
        <fullName>Uncharacterized protein BLLF2</fullName>
    </recommendedName>
</protein>
<comment type="similarity">
    <text evidence="2">Belongs to the Epstein-Barr virus BLLF2 family.</text>
</comment>
<dbReference type="EMBL" id="L07923">
    <property type="protein sequence ID" value="AAA02788.1"/>
    <property type="molecule type" value="Genomic_DNA"/>
</dbReference>
<dbReference type="EMBL" id="L07922">
    <property type="protein sequence ID" value="AAA02784.1"/>
    <property type="molecule type" value="Genomic_DNA"/>
</dbReference>
<dbReference type="Proteomes" id="UP000007639">
    <property type="component" value="Genome"/>
</dbReference>
<dbReference type="InterPro" id="IPR035221">
    <property type="entry name" value="DUF5451"/>
</dbReference>
<dbReference type="Pfam" id="PF17532">
    <property type="entry name" value="DUF5451"/>
    <property type="match status" value="1"/>
</dbReference>
<accession>P68345</accession>
<accession>P68346</accession>
<accession>Q07285</accession>
<sequence>MCPPVRQRPAQAPPAKRQALETVPHPQNRGRLMSPKARPPKMQRRPRPPVAKRRRFPRSPQQVERPILPPVESTPQDMEPGQVQSPPQITAVIQLRQERDTMRPPIYLPALLANCGPAGLLRAHRLPQPKPPCLSRQRPSPDSQTSPC</sequence>
<keyword id="KW-0244">Early protein</keyword>
<keyword id="KW-1185">Reference proteome</keyword>
<proteinExistence type="inferred from homology"/>
<reference key="1">
    <citation type="journal article" date="1993" name="Virology">
        <title>The Epstein-Barr virus candidate vaccine antigen gp340/220 is highly conserved between virus types A and B.</title>
        <authorList>
            <person name="Lees J.F."/>
            <person name="Arrand J.E."/>
            <person name="Pepper S.V."/>
            <person name="Stewart J.P."/>
            <person name="Mackett M."/>
            <person name="Arrand J.R."/>
        </authorList>
    </citation>
    <scope>NUCLEOTIDE SEQUENCE [LARGE SCALE GENOMIC DNA]</scope>
</reference>
<evidence type="ECO:0000256" key="1">
    <source>
        <dbReference type="SAM" id="MobiDB-lite"/>
    </source>
</evidence>
<evidence type="ECO:0000305" key="2"/>
<organismHost>
    <name type="scientific">Homo sapiens</name>
    <name type="common">Human</name>
    <dbReference type="NCBI Taxonomy" id="9606"/>
</organismHost>
<feature type="chain" id="PRO_0000116275" description="Uncharacterized protein BLLF2">
    <location>
        <begin position="1"/>
        <end position="148"/>
    </location>
</feature>
<feature type="region of interest" description="Disordered" evidence="1">
    <location>
        <begin position="1"/>
        <end position="86"/>
    </location>
</feature>
<feature type="region of interest" description="Disordered" evidence="1">
    <location>
        <begin position="122"/>
        <end position="148"/>
    </location>
</feature>
<feature type="compositionally biased region" description="Low complexity" evidence="1">
    <location>
        <begin position="1"/>
        <end position="17"/>
    </location>
</feature>
<feature type="compositionally biased region" description="Basic residues" evidence="1">
    <location>
        <begin position="38"/>
        <end position="57"/>
    </location>
</feature>
<feature type="compositionally biased region" description="Polar residues" evidence="1">
    <location>
        <begin position="137"/>
        <end position="148"/>
    </location>
</feature>